<dbReference type="GO" id="GO:0005737">
    <property type="term" value="C:cytoplasm"/>
    <property type="evidence" value="ECO:0007669"/>
    <property type="project" value="UniProtKB-SubCell"/>
</dbReference>
<proteinExistence type="evidence at protein level"/>
<protein>
    <recommendedName>
        <fullName evidence="2 4">Putative heat shock protein 2</fullName>
    </recommendedName>
</protein>
<feature type="chain" id="PRO_0000397956" description="Putative heat shock protein 2">
    <location>
        <begin position="1" status="less than"/>
        <end position="8" status="greater than"/>
    </location>
</feature>
<feature type="non-terminal residue" evidence="4">
    <location>
        <position position="1"/>
    </location>
</feature>
<feature type="non-terminal residue" evidence="4">
    <location>
        <position position="8"/>
    </location>
</feature>
<comment type="function">
    <text evidence="1">Putative molecular chaperone that may promote the maturation, structural maintenance and proper regulation of specific target proteins.</text>
</comment>
<comment type="subunit">
    <text evidence="1">Homodimer.</text>
</comment>
<comment type="subcellular location">
    <subcellularLocation>
        <location evidence="1">Cytoplasm</location>
    </subcellularLocation>
</comment>
<comment type="similarity">
    <text evidence="3">Belongs to the heat shock protein 90 family.</text>
</comment>
<reference evidence="5" key="1">
    <citation type="journal article" date="2008" name="J. Proteomics">
        <title>A proteomics approach to identify proteins differentially expressed in Douglas-fir seedlings infected by Phellinus sulphurascens.</title>
        <authorList>
            <person name="Islam M.A."/>
            <person name="Sturrock R.N."/>
            <person name="Ekramoddoullah A.K.M."/>
        </authorList>
    </citation>
    <scope>IDENTIFICATION BY MASS SPECTROMETRY</scope>
</reference>
<evidence type="ECO:0000250" key="1"/>
<evidence type="ECO:0000250" key="2">
    <source>
        <dbReference type="UniProtKB" id="P84717"/>
    </source>
</evidence>
<evidence type="ECO:0000255" key="3"/>
<evidence type="ECO:0000303" key="4">
    <source>
    </source>
</evidence>
<evidence type="ECO:0000305" key="5"/>
<organism>
    <name type="scientific">Pseudotsuga menziesii</name>
    <name type="common">Douglas-fir</name>
    <name type="synonym">Abies menziesii</name>
    <dbReference type="NCBI Taxonomy" id="3357"/>
    <lineage>
        <taxon>Eukaryota</taxon>
        <taxon>Viridiplantae</taxon>
        <taxon>Streptophyta</taxon>
        <taxon>Embryophyta</taxon>
        <taxon>Tracheophyta</taxon>
        <taxon>Spermatophyta</taxon>
        <taxon>Pinopsida</taxon>
        <taxon>Pinidae</taxon>
        <taxon>Conifers I</taxon>
        <taxon>Pinales</taxon>
        <taxon>Pinaceae</taxon>
        <taxon>Pseudotsuga</taxon>
    </lineage>
</organism>
<name>HSP02_PSEMZ</name>
<keyword id="KW-0143">Chaperone</keyword>
<keyword id="KW-0963">Cytoplasm</keyword>
<keyword id="KW-0346">Stress response</keyword>
<sequence length="8" mass="973">ELLSEINR</sequence>
<accession>P85917</accession>